<name>SOX21_MOUSE</name>
<gene>
    <name type="primary">Sox21</name>
</gene>
<accession>Q811W0</accession>
<accession>B9EJU0</accession>
<accession>Q8VH35</accession>
<comment type="function">
    <text evidence="2 3">May play a role as an activator of transcription of OPRM1 (PubMed:12446692). Overexpression of SOX21 can up-regulate the OPRM1 distal promoter activity in mor-expressing neuronal cells (PubMed:12446692). May play a role in ameloblast differentiation (PubMed:34812512).</text>
</comment>
<comment type="subcellular location">
    <subcellularLocation>
        <location evidence="1">Nucleus</location>
    </subcellularLocation>
</comment>
<comment type="developmental stage">
    <text evidence="3">Highly expressed in both pre-secretory and secretory differentiated ameloblasts in molars at postnatal day 1 (P1).</text>
</comment>
<comment type="disruption phenotype">
    <text evidence="3">Expression of ameloblastin AMBN is significantly reduced in the tooth germ of postnatal day 1 (P1) molars, but ASCL5/AmeloD expression is not altered.</text>
</comment>
<dbReference type="EMBL" id="AY142959">
    <property type="protein sequence ID" value="AAN60055.1"/>
    <property type="molecule type" value="mRNA"/>
</dbReference>
<dbReference type="EMBL" id="AY069926">
    <property type="protein sequence ID" value="AAL49967.1"/>
    <property type="molecule type" value="mRNA"/>
</dbReference>
<dbReference type="EMBL" id="BC069176">
    <property type="protein sequence ID" value="AAH69176.1"/>
    <property type="molecule type" value="mRNA"/>
</dbReference>
<dbReference type="EMBL" id="BC147556">
    <property type="protein sequence ID" value="AAI47557.1"/>
    <property type="molecule type" value="mRNA"/>
</dbReference>
<dbReference type="EMBL" id="BC147565">
    <property type="protein sequence ID" value="AAI47566.1"/>
    <property type="molecule type" value="mRNA"/>
</dbReference>
<dbReference type="CCDS" id="CCDS27334.1"/>
<dbReference type="RefSeq" id="NP_808421.1">
    <property type="nucleotide sequence ID" value="NM_177753.3"/>
</dbReference>
<dbReference type="SMR" id="Q811W0"/>
<dbReference type="BioGRID" id="230133">
    <property type="interactions" value="1"/>
</dbReference>
<dbReference type="FunCoup" id="Q811W0">
    <property type="interactions" value="783"/>
</dbReference>
<dbReference type="STRING" id="10090.ENSMUSP00000127396"/>
<dbReference type="iPTMnet" id="Q811W0"/>
<dbReference type="PhosphoSitePlus" id="Q811W0"/>
<dbReference type="PaxDb" id="10090-ENSMUSP00000127396"/>
<dbReference type="ProteomicsDB" id="261556"/>
<dbReference type="Antibodypedia" id="24798">
    <property type="antibodies" value="191 antibodies from 30 providers"/>
</dbReference>
<dbReference type="DNASU" id="223227"/>
<dbReference type="Ensembl" id="ENSMUST00000170662.2">
    <property type="protein sequence ID" value="ENSMUSP00000127396.2"/>
    <property type="gene ID" value="ENSMUSG00000061517.9"/>
</dbReference>
<dbReference type="GeneID" id="223227"/>
<dbReference type="KEGG" id="mmu:223227"/>
<dbReference type="UCSC" id="uc007uyt.2">
    <property type="organism name" value="mouse"/>
</dbReference>
<dbReference type="AGR" id="MGI:2654070"/>
<dbReference type="CTD" id="11166"/>
<dbReference type="MGI" id="MGI:2654070">
    <property type="gene designation" value="Sox21"/>
</dbReference>
<dbReference type="VEuPathDB" id="HostDB:ENSMUSG00000061517"/>
<dbReference type="eggNOG" id="KOG0527">
    <property type="taxonomic scope" value="Eukaryota"/>
</dbReference>
<dbReference type="GeneTree" id="ENSGT00940000162795"/>
<dbReference type="HOGENOM" id="CLU_021123_3_1_1"/>
<dbReference type="InParanoid" id="Q811W0"/>
<dbReference type="OMA" id="LHGHEAF"/>
<dbReference type="OrthoDB" id="6247875at2759"/>
<dbReference type="PhylomeDB" id="Q811W0"/>
<dbReference type="TreeFam" id="TF351735"/>
<dbReference type="BioGRID-ORCS" id="223227">
    <property type="hits" value="0 hits in 79 CRISPR screens"/>
</dbReference>
<dbReference type="ChiTaRS" id="Sox21">
    <property type="organism name" value="mouse"/>
</dbReference>
<dbReference type="PRO" id="PR:Q811W0"/>
<dbReference type="Proteomes" id="UP000000589">
    <property type="component" value="Chromosome 14"/>
</dbReference>
<dbReference type="RNAct" id="Q811W0">
    <property type="molecule type" value="protein"/>
</dbReference>
<dbReference type="Bgee" id="ENSMUSG00000061517">
    <property type="expression patterns" value="Expressed in saccule of membranous labyrinth and 129 other cell types or tissues"/>
</dbReference>
<dbReference type="GO" id="GO:0005634">
    <property type="term" value="C:nucleus"/>
    <property type="evidence" value="ECO:0000305"/>
    <property type="project" value="MGI"/>
</dbReference>
<dbReference type="GO" id="GO:0003677">
    <property type="term" value="F:DNA binding"/>
    <property type="evidence" value="ECO:0000314"/>
    <property type="project" value="MGI"/>
</dbReference>
<dbReference type="GO" id="GO:0001228">
    <property type="term" value="F:DNA-binding transcription activator activity, RNA polymerase II-specific"/>
    <property type="evidence" value="ECO:0000314"/>
    <property type="project" value="NTNU_SB"/>
</dbReference>
<dbReference type="GO" id="GO:0003700">
    <property type="term" value="F:DNA-binding transcription factor activity"/>
    <property type="evidence" value="ECO:0000314"/>
    <property type="project" value="MGI"/>
</dbReference>
<dbReference type="GO" id="GO:0000978">
    <property type="term" value="F:RNA polymerase II cis-regulatory region sequence-specific DNA binding"/>
    <property type="evidence" value="ECO:0000314"/>
    <property type="project" value="NTNU_SB"/>
</dbReference>
<dbReference type="GO" id="GO:0042633">
    <property type="term" value="P:hair cycle"/>
    <property type="evidence" value="ECO:0000315"/>
    <property type="project" value="MGI"/>
</dbReference>
<dbReference type="GO" id="GO:0001942">
    <property type="term" value="P:hair follicle development"/>
    <property type="evidence" value="ECO:0000315"/>
    <property type="project" value="MGI"/>
</dbReference>
<dbReference type="GO" id="GO:0045944">
    <property type="term" value="P:positive regulation of transcription by RNA polymerase II"/>
    <property type="evidence" value="ECO:0000314"/>
    <property type="project" value="NTNU_SB"/>
</dbReference>
<dbReference type="GO" id="GO:0006355">
    <property type="term" value="P:regulation of DNA-templated transcription"/>
    <property type="evidence" value="ECO:0000314"/>
    <property type="project" value="MGI"/>
</dbReference>
<dbReference type="GO" id="GO:0043588">
    <property type="term" value="P:skin development"/>
    <property type="evidence" value="ECO:0000315"/>
    <property type="project" value="MGI"/>
</dbReference>
<dbReference type="GO" id="GO:0048863">
    <property type="term" value="P:stem cell differentiation"/>
    <property type="evidence" value="ECO:0007669"/>
    <property type="project" value="Ensembl"/>
</dbReference>
<dbReference type="CDD" id="cd01388">
    <property type="entry name" value="HMG-box_SoxB"/>
    <property type="match status" value="1"/>
</dbReference>
<dbReference type="FunFam" id="1.10.30.10:FF:000002">
    <property type="entry name" value="transcription factor Sox-2"/>
    <property type="match status" value="1"/>
</dbReference>
<dbReference type="Gene3D" id="1.10.30.10">
    <property type="entry name" value="High mobility group box domain"/>
    <property type="match status" value="1"/>
</dbReference>
<dbReference type="InterPro" id="IPR009071">
    <property type="entry name" value="HMG_box_dom"/>
</dbReference>
<dbReference type="InterPro" id="IPR036910">
    <property type="entry name" value="HMG_box_dom_sf"/>
</dbReference>
<dbReference type="InterPro" id="IPR022097">
    <property type="entry name" value="SOX_fam"/>
</dbReference>
<dbReference type="InterPro" id="IPR050140">
    <property type="entry name" value="SRY-related_HMG-box_TF-like"/>
</dbReference>
<dbReference type="PANTHER" id="PTHR10270">
    <property type="entry name" value="SOX TRANSCRIPTION FACTOR"/>
    <property type="match status" value="1"/>
</dbReference>
<dbReference type="PANTHER" id="PTHR10270:SF313">
    <property type="entry name" value="TRANSCRIPTION FACTOR SOX-21"/>
    <property type="match status" value="1"/>
</dbReference>
<dbReference type="Pfam" id="PF00505">
    <property type="entry name" value="HMG_box"/>
    <property type="match status" value="1"/>
</dbReference>
<dbReference type="Pfam" id="PF12336">
    <property type="entry name" value="SOXp"/>
    <property type="match status" value="1"/>
</dbReference>
<dbReference type="SMART" id="SM00398">
    <property type="entry name" value="HMG"/>
    <property type="match status" value="1"/>
</dbReference>
<dbReference type="SUPFAM" id="SSF47095">
    <property type="entry name" value="HMG-box"/>
    <property type="match status" value="1"/>
</dbReference>
<dbReference type="PROSITE" id="PS50118">
    <property type="entry name" value="HMG_BOX_2"/>
    <property type="match status" value="1"/>
</dbReference>
<keyword id="KW-0010">Activator</keyword>
<keyword id="KW-0238">DNA-binding</keyword>
<keyword id="KW-0539">Nucleus</keyword>
<keyword id="KW-1185">Reference proteome</keyword>
<keyword id="KW-0804">Transcription</keyword>
<keyword id="KW-0805">Transcription regulation</keyword>
<sequence>MSKPVDHVKRPMNAFMVWSRAQRRKMAQENPKMHNSEISKRLGAEWKLLTESEKRPFIDEAKRLRAMHMKEHPDYKYRPRRKPKTLLKKDKFAFPVPYGLGSVADAEHPALKAGAGLHAGAGGGLVPESLLANPEKAAAAAAAAAARVFFPQSAAAAAAAAAAAAAGSPYSLLDLGSKMAEISSSSSGLPYASSLGYPTAGAGAFHGAAAAAAAAAAAAGGHTHSHPSPGNPGYMIPCNCSAWPSPGLQPPLAYILLPGMGKPQLDPYPAAYAAAL</sequence>
<organism>
    <name type="scientific">Mus musculus</name>
    <name type="common">Mouse</name>
    <dbReference type="NCBI Taxonomy" id="10090"/>
    <lineage>
        <taxon>Eukaryota</taxon>
        <taxon>Metazoa</taxon>
        <taxon>Chordata</taxon>
        <taxon>Craniata</taxon>
        <taxon>Vertebrata</taxon>
        <taxon>Euteleostomi</taxon>
        <taxon>Mammalia</taxon>
        <taxon>Eutheria</taxon>
        <taxon>Euarchontoglires</taxon>
        <taxon>Glires</taxon>
        <taxon>Rodentia</taxon>
        <taxon>Myomorpha</taxon>
        <taxon>Muroidea</taxon>
        <taxon>Muridae</taxon>
        <taxon>Murinae</taxon>
        <taxon>Mus</taxon>
        <taxon>Mus</taxon>
    </lineage>
</organism>
<evidence type="ECO:0000255" key="1">
    <source>
        <dbReference type="PROSITE-ProRule" id="PRU00267"/>
    </source>
</evidence>
<evidence type="ECO:0000269" key="2">
    <source>
    </source>
</evidence>
<evidence type="ECO:0000269" key="3">
    <source>
    </source>
</evidence>
<evidence type="ECO:0000305" key="4"/>
<evidence type="ECO:0000312" key="5">
    <source>
        <dbReference type="Proteomes" id="UP000000589"/>
    </source>
</evidence>
<proteinExistence type="evidence at transcript level"/>
<feature type="chain" id="PRO_0000048771" description="Transcription factor SOX-21">
    <location>
        <begin position="1"/>
        <end position="276"/>
    </location>
</feature>
<feature type="DNA-binding region" description="HMG box" evidence="1">
    <location>
        <begin position="8"/>
        <end position="76"/>
    </location>
</feature>
<feature type="sequence conflict" description="In Ref. 2; AAL49967." evidence="4" ref="2">
    <original>A</original>
    <variation>G</variation>
    <location>
        <position position="21"/>
    </location>
</feature>
<feature type="sequence conflict" description="In Ref. 2; AAL49967." evidence="4" ref="2">
    <original>G</original>
    <variation>A</variation>
    <location>
        <position position="116"/>
    </location>
</feature>
<feature type="sequence conflict" description="In Ref. 2; AAL49967." evidence="4" ref="2">
    <original>K</original>
    <variation>R</variation>
    <location>
        <position position="178"/>
    </location>
</feature>
<feature type="sequence conflict" description="In Ref. 2; AAL49967." evidence="4" ref="2">
    <original>T</original>
    <variation>G</variation>
    <location>
        <position position="199"/>
    </location>
</feature>
<reference key="1">
    <citation type="journal article" date="2003" name="J. Biol. Chem.">
        <title>Mouse mu opioid receptor distal promoter transcriptional regulation by SOX proteins.</title>
        <authorList>
            <person name="Hwang C.K."/>
            <person name="Wu X."/>
            <person name="Wang G."/>
            <person name="Kim C.S."/>
            <person name="Loh H.H."/>
        </authorList>
    </citation>
    <scope>NUCLEOTIDE SEQUENCE [MRNA]</scope>
    <scope>FUNCTION</scope>
    <source>
        <strain>BALB/cJ</strain>
        <tissue>Brain</tissue>
    </source>
</reference>
<reference key="2">
    <citation type="submission" date="2001-12" db="EMBL/GenBank/DDBJ databases">
        <authorList>
            <person name="Uwanogho D.A."/>
        </authorList>
    </citation>
    <scope>NUCLEOTIDE SEQUENCE [MRNA]</scope>
    <source>
        <strain>BALB/cJ</strain>
    </source>
</reference>
<reference key="3">
    <citation type="journal article" date="2004" name="Genome Res.">
        <title>The status, quality, and expansion of the NIH full-length cDNA project: the Mammalian Gene Collection (MGC).</title>
        <authorList>
            <consortium name="The MGC Project Team"/>
        </authorList>
    </citation>
    <scope>NUCLEOTIDE SEQUENCE [LARGE SCALE MRNA]</scope>
    <source>
        <strain>C57BL/6J</strain>
        <tissue>Brain</tissue>
    </source>
</reference>
<reference evidence="5" key="4">
    <citation type="journal article" date="2009" name="PLoS Biol.">
        <title>Lineage-specific biology revealed by a finished genome assembly of the mouse.</title>
        <authorList>
            <person name="Church D.M."/>
            <person name="Goodstadt L."/>
            <person name="Hillier L.W."/>
            <person name="Zody M.C."/>
            <person name="Goldstein S."/>
            <person name="She X."/>
            <person name="Bult C.J."/>
            <person name="Agarwala R."/>
            <person name="Cherry J.L."/>
            <person name="DiCuccio M."/>
            <person name="Hlavina W."/>
            <person name="Kapustin Y."/>
            <person name="Meric P."/>
            <person name="Maglott D."/>
            <person name="Birtle Z."/>
            <person name="Marques A.C."/>
            <person name="Graves T."/>
            <person name="Zhou S."/>
            <person name="Teague B."/>
            <person name="Potamousis K."/>
            <person name="Churas C."/>
            <person name="Place M."/>
            <person name="Herschleb J."/>
            <person name="Runnheim R."/>
            <person name="Forrest D."/>
            <person name="Amos-Landgraf J."/>
            <person name="Schwartz D.C."/>
            <person name="Cheng Z."/>
            <person name="Lindblad-Toh K."/>
            <person name="Eichler E.E."/>
            <person name="Ponting C.P."/>
        </authorList>
    </citation>
    <scope>NUCLEOTIDE SEQUENCE [LARGE SCALE GENOMIC DNA]</scope>
    <source>
        <strain evidence="5">C57BL/6J</strain>
    </source>
</reference>
<reference evidence="4" key="5">
    <citation type="journal article" date="2022" name="J. Cell. Physiol.">
        <title>The tooth-specific basic helix-loop-helix factor AmeloD promotes differentiation of ameloblasts.</title>
        <authorList>
            <person name="Jia L."/>
            <person name="Chiba Y."/>
            <person name="Saito K."/>
            <person name="Yoshizaki K."/>
            <person name="Tian T."/>
            <person name="Han X."/>
            <person name="Mizuta K."/>
            <person name="Chiba M."/>
            <person name="Wang X."/>
            <person name="Al Thamin S."/>
            <person name="Yamada A."/>
            <person name="Fukumoto S."/>
        </authorList>
    </citation>
    <scope>FUNCTION</scope>
    <scope>DEVELOPMENTAL STAGE</scope>
    <scope>DISRUPTION PHENOTYPE</scope>
</reference>
<protein>
    <recommendedName>
        <fullName>Transcription factor SOX-21</fullName>
    </recommendedName>
</protein>